<reference key="1">
    <citation type="journal article" date="1999" name="Nature">
        <title>Sequence and analysis of chromosome 2 of the plant Arabidopsis thaliana.</title>
        <authorList>
            <person name="Lin X."/>
            <person name="Kaul S."/>
            <person name="Rounsley S.D."/>
            <person name="Shea T.P."/>
            <person name="Benito M.-I."/>
            <person name="Town C.D."/>
            <person name="Fujii C.Y."/>
            <person name="Mason T.M."/>
            <person name="Bowman C.L."/>
            <person name="Barnstead M.E."/>
            <person name="Feldblyum T.V."/>
            <person name="Buell C.R."/>
            <person name="Ketchum K.A."/>
            <person name="Lee J.J."/>
            <person name="Ronning C.M."/>
            <person name="Koo H.L."/>
            <person name="Moffat K.S."/>
            <person name="Cronin L.A."/>
            <person name="Shen M."/>
            <person name="Pai G."/>
            <person name="Van Aken S."/>
            <person name="Umayam L."/>
            <person name="Tallon L.J."/>
            <person name="Gill J.E."/>
            <person name="Adams M.D."/>
            <person name="Carrera A.J."/>
            <person name="Creasy T.H."/>
            <person name="Goodman H.M."/>
            <person name="Somerville C.R."/>
            <person name="Copenhaver G.P."/>
            <person name="Preuss D."/>
            <person name="Nierman W.C."/>
            <person name="White O."/>
            <person name="Eisen J.A."/>
            <person name="Salzberg S.L."/>
            <person name="Fraser C.M."/>
            <person name="Venter J.C."/>
        </authorList>
    </citation>
    <scope>NUCLEOTIDE SEQUENCE [LARGE SCALE GENOMIC DNA]</scope>
    <source>
        <strain>cv. Columbia</strain>
    </source>
</reference>
<reference key="2">
    <citation type="journal article" date="2017" name="Plant J.">
        <title>Araport11: a complete reannotation of the Arabidopsis thaliana reference genome.</title>
        <authorList>
            <person name="Cheng C.Y."/>
            <person name="Krishnakumar V."/>
            <person name="Chan A.P."/>
            <person name="Thibaud-Nissen F."/>
            <person name="Schobel S."/>
            <person name="Town C.D."/>
        </authorList>
    </citation>
    <scope>GENOME REANNOTATION</scope>
    <source>
        <strain>cv. Columbia</strain>
    </source>
</reference>
<reference key="3">
    <citation type="journal article" date="2003" name="Science">
        <title>Empirical analysis of transcriptional activity in the Arabidopsis genome.</title>
        <authorList>
            <person name="Yamada K."/>
            <person name="Lim J."/>
            <person name="Dale J.M."/>
            <person name="Chen H."/>
            <person name="Shinn P."/>
            <person name="Palm C.J."/>
            <person name="Southwick A.M."/>
            <person name="Wu H.C."/>
            <person name="Kim C.J."/>
            <person name="Nguyen M."/>
            <person name="Pham P.K."/>
            <person name="Cheuk R.F."/>
            <person name="Karlin-Newmann G."/>
            <person name="Liu S.X."/>
            <person name="Lam B."/>
            <person name="Sakano H."/>
            <person name="Wu T."/>
            <person name="Yu G."/>
            <person name="Miranda M."/>
            <person name="Quach H.L."/>
            <person name="Tripp M."/>
            <person name="Chang C.H."/>
            <person name="Lee J.M."/>
            <person name="Toriumi M.J."/>
            <person name="Chan M.M."/>
            <person name="Tang C.C."/>
            <person name="Onodera C.S."/>
            <person name="Deng J.M."/>
            <person name="Akiyama K."/>
            <person name="Ansari Y."/>
            <person name="Arakawa T."/>
            <person name="Banh J."/>
            <person name="Banno F."/>
            <person name="Bowser L."/>
            <person name="Brooks S.Y."/>
            <person name="Carninci P."/>
            <person name="Chao Q."/>
            <person name="Choy N."/>
            <person name="Enju A."/>
            <person name="Goldsmith A.D."/>
            <person name="Gurjal M."/>
            <person name="Hansen N.F."/>
            <person name="Hayashizaki Y."/>
            <person name="Johnson-Hopson C."/>
            <person name="Hsuan V.W."/>
            <person name="Iida K."/>
            <person name="Karnes M."/>
            <person name="Khan S."/>
            <person name="Koesema E."/>
            <person name="Ishida J."/>
            <person name="Jiang P.X."/>
            <person name="Jones T."/>
            <person name="Kawai J."/>
            <person name="Kamiya A."/>
            <person name="Meyers C."/>
            <person name="Nakajima M."/>
            <person name="Narusaka M."/>
            <person name="Seki M."/>
            <person name="Sakurai T."/>
            <person name="Satou M."/>
            <person name="Tamse R."/>
            <person name="Vaysberg M."/>
            <person name="Wallender E.K."/>
            <person name="Wong C."/>
            <person name="Yamamura Y."/>
            <person name="Yuan S."/>
            <person name="Shinozaki K."/>
            <person name="Davis R.W."/>
            <person name="Theologis A."/>
            <person name="Ecker J.R."/>
        </authorList>
    </citation>
    <scope>NUCLEOTIDE SEQUENCE [LARGE SCALE MRNA]</scope>
    <source>
        <strain>cv. Columbia</strain>
    </source>
</reference>
<reference key="4">
    <citation type="journal article" date="2001" name="Plant Physiol.">
        <title>The organization of cytoplasmic ribosomal protein genes in the Arabidopsis genome.</title>
        <authorList>
            <person name="Barakat A."/>
            <person name="Szick-Miranda K."/>
            <person name="Chang I.-F."/>
            <person name="Guyot R."/>
            <person name="Blanc G."/>
            <person name="Cooke R."/>
            <person name="Delseny M."/>
            <person name="Bailey-Serres J."/>
        </authorList>
    </citation>
    <scope>GENE FAMILY ORGANIZATION</scope>
    <scope>NOMENCLATURE</scope>
</reference>
<reference key="5">
    <citation type="journal article" date="2005" name="RNA">
        <title>Evolutionary conservation of minor U12-type spliceosome between plants and humans.</title>
        <authorList>
            <person name="Lorkovic Z.J."/>
            <person name="Lehner R."/>
            <person name="Forstner C."/>
            <person name="Barta A."/>
        </authorList>
    </citation>
    <scope>INTERACTION WITH SNRNP35</scope>
</reference>
<reference key="6">
    <citation type="journal article" date="2023" name="Plant Cell">
        <title>An updated nomenclature for plant ribosomal protein genes.</title>
        <authorList>
            <person name="Scarpin M.R."/>
            <person name="Busche M."/>
            <person name="Martinez R.E."/>
            <person name="Harper L.C."/>
            <person name="Reiser L."/>
            <person name="Szakonyi D."/>
            <person name="Merchante C."/>
            <person name="Lan T."/>
            <person name="Xiong W."/>
            <person name="Mo B."/>
            <person name="Tang G."/>
            <person name="Chen X."/>
            <person name="Bailey-Serres J."/>
            <person name="Browning K.S."/>
            <person name="Brunkard J.O."/>
        </authorList>
    </citation>
    <scope>NOMENCLATURE</scope>
</reference>
<evidence type="ECO:0000255" key="1">
    <source>
        <dbReference type="PROSITE-ProRule" id="PRU00118"/>
    </source>
</evidence>
<evidence type="ECO:0000269" key="2">
    <source>
    </source>
</evidence>
<evidence type="ECO:0000303" key="3">
    <source>
    </source>
</evidence>
<evidence type="ECO:0000305" key="4"/>
<name>RS3A_ARATH</name>
<proteinExistence type="evidence at protein level"/>
<protein>
    <recommendedName>
        <fullName evidence="3">Small ribosomal subunit protein uS3z</fullName>
    </recommendedName>
    <alternativeName>
        <fullName>40S ribosomal protein S3-1</fullName>
    </alternativeName>
</protein>
<feature type="chain" id="PRO_0000250177" description="Small ribosomal subunit protein uS3z">
    <location>
        <begin position="1"/>
        <end position="250"/>
    </location>
</feature>
<feature type="domain" description="KH type-2" evidence="1">
    <location>
        <begin position="21"/>
        <end position="92"/>
    </location>
</feature>
<sequence length="250" mass="27519">MATQISKKRKFVADGVFYAELNEVLTRELAEDGYSGVEVRVTPMRTEIIIRATRTQNVLGEKGRRIRELTSLVQKRFKFPVDSVELYAEKVNNRGLCAIAQAESLRYKLLGGLAVRRACYGVLRFVMESGAKGCEVIVSGKLRAARAKSMKFKDGYMVSSGQPTKEYIDAAVRHVLLRQGVLGIKVKIMLDWDPTGKSGPKTPLPDVVIIHAPKDDVVYSAPAQAAAPVTLVQEAPLTTVDYPEMIPPVA</sequence>
<organism>
    <name type="scientific">Arabidopsis thaliana</name>
    <name type="common">Mouse-ear cress</name>
    <dbReference type="NCBI Taxonomy" id="3702"/>
    <lineage>
        <taxon>Eukaryota</taxon>
        <taxon>Viridiplantae</taxon>
        <taxon>Streptophyta</taxon>
        <taxon>Embryophyta</taxon>
        <taxon>Tracheophyta</taxon>
        <taxon>Spermatophyta</taxon>
        <taxon>Magnoliopsida</taxon>
        <taxon>eudicotyledons</taxon>
        <taxon>Gunneridae</taxon>
        <taxon>Pentapetalae</taxon>
        <taxon>rosids</taxon>
        <taxon>malvids</taxon>
        <taxon>Brassicales</taxon>
        <taxon>Brassicaceae</taxon>
        <taxon>Camelineae</taxon>
        <taxon>Arabidopsis</taxon>
    </lineage>
</organism>
<accession>Q9SIP7</accession>
<comment type="subunit">
    <text evidence="2">Interacts with SNRNP35.</text>
</comment>
<comment type="similarity">
    <text evidence="4">Belongs to the universal ribosomal protein uS3 family.</text>
</comment>
<keyword id="KW-1185">Reference proteome</keyword>
<keyword id="KW-0687">Ribonucleoprotein</keyword>
<keyword id="KW-0689">Ribosomal protein</keyword>
<keyword id="KW-0694">RNA-binding</keyword>
<gene>
    <name type="primary">RPS3A</name>
    <name type="ordered locus">At2g31610</name>
    <name type="ORF">T9H9.13</name>
</gene>
<dbReference type="EMBL" id="AC007071">
    <property type="protein sequence ID" value="AAD24852.1"/>
    <property type="molecule type" value="Genomic_DNA"/>
</dbReference>
<dbReference type="EMBL" id="CP002685">
    <property type="protein sequence ID" value="AEC08567.1"/>
    <property type="molecule type" value="Genomic_DNA"/>
</dbReference>
<dbReference type="EMBL" id="AF378887">
    <property type="protein sequence ID" value="AAK55690.1"/>
    <property type="molecule type" value="mRNA"/>
</dbReference>
<dbReference type="EMBL" id="AY046041">
    <property type="protein sequence ID" value="AAK76715.1"/>
    <property type="molecule type" value="mRNA"/>
</dbReference>
<dbReference type="EMBL" id="AY052749">
    <property type="protein sequence ID" value="AAK96463.1"/>
    <property type="molecule type" value="mRNA"/>
</dbReference>
<dbReference type="EMBL" id="AY054622">
    <property type="protein sequence ID" value="AAK96813.1"/>
    <property type="molecule type" value="mRNA"/>
</dbReference>
<dbReference type="EMBL" id="AY081517">
    <property type="protein sequence ID" value="AAM10079.1"/>
    <property type="molecule type" value="mRNA"/>
</dbReference>
<dbReference type="EMBL" id="AY091208">
    <property type="protein sequence ID" value="AAM14147.1"/>
    <property type="molecule type" value="mRNA"/>
</dbReference>
<dbReference type="PIR" id="H84722">
    <property type="entry name" value="H84722"/>
</dbReference>
<dbReference type="RefSeq" id="NP_180719.1">
    <property type="nucleotide sequence ID" value="NM_128718.5"/>
</dbReference>
<dbReference type="SMR" id="Q9SIP7"/>
<dbReference type="BioGRID" id="3066">
    <property type="interactions" value="156"/>
</dbReference>
<dbReference type="FunCoup" id="Q9SIP7">
    <property type="interactions" value="3695"/>
</dbReference>
<dbReference type="IntAct" id="Q9SIP7">
    <property type="interactions" value="2"/>
</dbReference>
<dbReference type="STRING" id="3702.Q9SIP7"/>
<dbReference type="iPTMnet" id="Q9SIP7"/>
<dbReference type="PaxDb" id="3702-AT2G31610.1"/>
<dbReference type="ProteomicsDB" id="226883"/>
<dbReference type="EnsemblPlants" id="AT2G31610.1">
    <property type="protein sequence ID" value="AT2G31610.1"/>
    <property type="gene ID" value="AT2G31610"/>
</dbReference>
<dbReference type="GeneID" id="817719"/>
<dbReference type="Gramene" id="AT2G31610.1">
    <property type="protein sequence ID" value="AT2G31610.1"/>
    <property type="gene ID" value="AT2G31610"/>
</dbReference>
<dbReference type="KEGG" id="ath:AT2G31610"/>
<dbReference type="Araport" id="AT2G31610"/>
<dbReference type="TAIR" id="AT2G31610"/>
<dbReference type="eggNOG" id="KOG3181">
    <property type="taxonomic scope" value="Eukaryota"/>
</dbReference>
<dbReference type="HOGENOM" id="CLU_058591_2_1_1"/>
<dbReference type="InParanoid" id="Q9SIP7"/>
<dbReference type="OMA" id="NKKKWMI"/>
<dbReference type="OrthoDB" id="584182at2759"/>
<dbReference type="PhylomeDB" id="Q9SIP7"/>
<dbReference type="CD-CODE" id="4299E36E">
    <property type="entry name" value="Nucleolus"/>
</dbReference>
<dbReference type="PRO" id="PR:Q9SIP7"/>
<dbReference type="Proteomes" id="UP000006548">
    <property type="component" value="Chromosome 2"/>
</dbReference>
<dbReference type="ExpressionAtlas" id="Q9SIP7">
    <property type="expression patterns" value="baseline and differential"/>
</dbReference>
<dbReference type="GO" id="GO:0009507">
    <property type="term" value="C:chloroplast"/>
    <property type="evidence" value="ECO:0007005"/>
    <property type="project" value="TAIR"/>
</dbReference>
<dbReference type="GO" id="GO:0022626">
    <property type="term" value="C:cytosolic ribosome"/>
    <property type="evidence" value="ECO:0007005"/>
    <property type="project" value="TAIR"/>
</dbReference>
<dbReference type="GO" id="GO:0022627">
    <property type="term" value="C:cytosolic small ribosomal subunit"/>
    <property type="evidence" value="ECO:0007005"/>
    <property type="project" value="TAIR"/>
</dbReference>
<dbReference type="GO" id="GO:0005777">
    <property type="term" value="C:peroxisome"/>
    <property type="evidence" value="ECO:0007005"/>
    <property type="project" value="TAIR"/>
</dbReference>
<dbReference type="GO" id="GO:0000325">
    <property type="term" value="C:plant-type vacuole"/>
    <property type="evidence" value="ECO:0007005"/>
    <property type="project" value="TAIR"/>
</dbReference>
<dbReference type="GO" id="GO:0009506">
    <property type="term" value="C:plasmodesma"/>
    <property type="evidence" value="ECO:0007005"/>
    <property type="project" value="TAIR"/>
</dbReference>
<dbReference type="GO" id="GO:0003729">
    <property type="term" value="F:mRNA binding"/>
    <property type="evidence" value="ECO:0000314"/>
    <property type="project" value="TAIR"/>
</dbReference>
<dbReference type="GO" id="GO:0003735">
    <property type="term" value="F:structural constituent of ribosome"/>
    <property type="evidence" value="ECO:0000314"/>
    <property type="project" value="CAFA"/>
</dbReference>
<dbReference type="GO" id="GO:0006412">
    <property type="term" value="P:translation"/>
    <property type="evidence" value="ECO:0007669"/>
    <property type="project" value="InterPro"/>
</dbReference>
<dbReference type="CDD" id="cd02413">
    <property type="entry name" value="KH-II_40S_S3"/>
    <property type="match status" value="1"/>
</dbReference>
<dbReference type="FunFam" id="3.30.1140.32:FF:000004">
    <property type="entry name" value="40S ribosomal protein S3"/>
    <property type="match status" value="1"/>
</dbReference>
<dbReference type="FunFam" id="3.30.300.20:FF:000006">
    <property type="entry name" value="40S ribosomal protein S3"/>
    <property type="match status" value="1"/>
</dbReference>
<dbReference type="Gene3D" id="3.30.300.20">
    <property type="match status" value="1"/>
</dbReference>
<dbReference type="Gene3D" id="3.30.1140.32">
    <property type="entry name" value="Ribosomal protein S3, C-terminal domain"/>
    <property type="match status" value="1"/>
</dbReference>
<dbReference type="InterPro" id="IPR015946">
    <property type="entry name" value="KH_dom-like_a/b"/>
</dbReference>
<dbReference type="InterPro" id="IPR004044">
    <property type="entry name" value="KH_dom_type_2"/>
</dbReference>
<dbReference type="InterPro" id="IPR009019">
    <property type="entry name" value="KH_sf_prok-type"/>
</dbReference>
<dbReference type="InterPro" id="IPR036419">
    <property type="entry name" value="Ribosomal_S3_C_sf"/>
</dbReference>
<dbReference type="InterPro" id="IPR001351">
    <property type="entry name" value="Ribosomal_uS3_C"/>
</dbReference>
<dbReference type="InterPro" id="IPR005703">
    <property type="entry name" value="Ribosomal_uS3_euk/arc"/>
</dbReference>
<dbReference type="NCBIfam" id="NF003219">
    <property type="entry name" value="PRK04191.1"/>
    <property type="match status" value="1"/>
</dbReference>
<dbReference type="NCBIfam" id="TIGR01008">
    <property type="entry name" value="uS3_euk_arch"/>
    <property type="match status" value="1"/>
</dbReference>
<dbReference type="PANTHER" id="PTHR11760">
    <property type="entry name" value="30S/40S RIBOSOMAL PROTEIN S3"/>
    <property type="match status" value="1"/>
</dbReference>
<dbReference type="PANTHER" id="PTHR11760:SF69">
    <property type="entry name" value="SMALL RIBOSOMAL SUBUNIT PROTEIN US3X-RELATED"/>
    <property type="match status" value="1"/>
</dbReference>
<dbReference type="Pfam" id="PF07650">
    <property type="entry name" value="KH_2"/>
    <property type="match status" value="1"/>
</dbReference>
<dbReference type="Pfam" id="PF00189">
    <property type="entry name" value="Ribosomal_S3_C"/>
    <property type="match status" value="1"/>
</dbReference>
<dbReference type="SUPFAM" id="SSF54814">
    <property type="entry name" value="Prokaryotic type KH domain (KH-domain type II)"/>
    <property type="match status" value="1"/>
</dbReference>
<dbReference type="SUPFAM" id="SSF54821">
    <property type="entry name" value="Ribosomal protein S3 C-terminal domain"/>
    <property type="match status" value="1"/>
</dbReference>
<dbReference type="PROSITE" id="PS50823">
    <property type="entry name" value="KH_TYPE_2"/>
    <property type="match status" value="1"/>
</dbReference>